<protein>
    <recommendedName>
        <fullName>Lactose-binding protein</fullName>
        <shortName>LBP</shortName>
    </recommendedName>
</protein>
<gene>
    <name type="primary">lacE</name>
</gene>
<name>LACE_RHIRD</name>
<proteinExistence type="evidence at protein level"/>
<sequence length="422" mass="45904">MDYSRLLKRSVSAALTAAALLCSTAAFAGEVTIWCWDPNFNVAIMKEAAERYTAKHPDTTFNIVDFAKADVEQKLQTGLASGMTDTLPDIVLIEDYGAQKYLQSFPGSFAALTDKIDFSGFAKYKVDLMTLEGQVYGVPFDSGVTGLYYRTDYLEQAGFKPEDMQNLTWDRFIEIGKEVKAKTGHEMMALDANDGGLIRIMMQSGGQWYFNEDGSLNITGNAALKAALETQARIVNERVAKPTSGSNDGIRALTSGDVASVLRGVWITGTVKSQPDQAGKWALTAIPKLNIEGATAASNLGGSSWYVLEASAEKDEAIDFLNEIYAKDLDFYQKILTERGAVGSLLAARTGEAYQKPDDFFGGQTVWQNFADWLVQVPAVNYGIFTNELDTAVTANFPALVKGTPVDEVLKAIEDQAAGQIQ</sequence>
<accession>P29822</accession>
<organism>
    <name type="scientific">Rhizobium radiobacter</name>
    <name type="common">Agrobacterium tumefaciens</name>
    <name type="synonym">Agrobacterium radiobacter</name>
    <dbReference type="NCBI Taxonomy" id="358"/>
    <lineage>
        <taxon>Bacteria</taxon>
        <taxon>Pseudomonadati</taxon>
        <taxon>Pseudomonadota</taxon>
        <taxon>Alphaproteobacteria</taxon>
        <taxon>Hyphomicrobiales</taxon>
        <taxon>Rhizobiaceae</taxon>
        <taxon>Rhizobium/Agrobacterium group</taxon>
        <taxon>Agrobacterium</taxon>
        <taxon>Agrobacterium tumefaciens complex</taxon>
    </lineage>
</organism>
<dbReference type="EMBL" id="X66596">
    <property type="protein sequence ID" value="CAA47161.1"/>
    <property type="molecule type" value="Genomic_DNA"/>
</dbReference>
<dbReference type="PIR" id="S25247">
    <property type="entry name" value="JGAGLR"/>
</dbReference>
<dbReference type="SMR" id="P29822"/>
<dbReference type="TCDB" id="3.A.1.1.4">
    <property type="family name" value="the atp-binding cassette (abc) superfamily"/>
</dbReference>
<dbReference type="GO" id="GO:0042597">
    <property type="term" value="C:periplasmic space"/>
    <property type="evidence" value="ECO:0007669"/>
    <property type="project" value="UniProtKB-SubCell"/>
</dbReference>
<dbReference type="Gene3D" id="3.40.190.10">
    <property type="entry name" value="Periplasmic binding protein-like II"/>
    <property type="match status" value="1"/>
</dbReference>
<dbReference type="InterPro" id="IPR050490">
    <property type="entry name" value="Bact_solute-bd_prot1"/>
</dbReference>
<dbReference type="InterPro" id="IPR006059">
    <property type="entry name" value="SBP"/>
</dbReference>
<dbReference type="PANTHER" id="PTHR43649">
    <property type="entry name" value="ARABINOSE-BINDING PROTEIN-RELATED"/>
    <property type="match status" value="1"/>
</dbReference>
<dbReference type="PANTHER" id="PTHR43649:SF32">
    <property type="entry name" value="SUGAR BINDING SECRETED PROTEIN"/>
    <property type="match status" value="1"/>
</dbReference>
<dbReference type="Pfam" id="PF13416">
    <property type="entry name" value="SBP_bac_8"/>
    <property type="match status" value="1"/>
</dbReference>
<dbReference type="SUPFAM" id="SSF53850">
    <property type="entry name" value="Periplasmic binding protein-like II"/>
    <property type="match status" value="1"/>
</dbReference>
<feature type="signal peptide" evidence="2">
    <location>
        <begin position="1"/>
        <end position="28"/>
    </location>
</feature>
<feature type="chain" id="PRO_0000031693" description="Lactose-binding protein">
    <location>
        <begin position="29"/>
        <end position="422"/>
    </location>
</feature>
<feature type="region of interest" description="Lactose-binding" evidence="1">
    <location>
        <begin position="246"/>
        <end position="277"/>
    </location>
</feature>
<reference key="1">
    <citation type="journal article" date="1992" name="Mol. Microbiol.">
        <title>Molecular analysis of the lac operon encoding the binding-protein-dependent lactose transport system and beta-galactosidase in Agrobacterium radiobacter.</title>
        <authorList>
            <person name="Williams S.G."/>
            <person name="Greenwood J.A."/>
            <person name="Jones C.W."/>
        </authorList>
    </citation>
    <scope>NUCLEOTIDE SEQUENCE [GENOMIC DNA]</scope>
    <source>
        <strain>AR50</strain>
    </source>
</reference>
<reference key="2">
    <citation type="journal article" date="1990" name="J. Bacteriol.">
        <title>Binding-protein-dependent lactose transport in Agrobacterium radiobacter.</title>
        <authorList>
            <person name="Greenwood J.A."/>
            <person name="Cornish A."/>
            <person name="Jones C.W."/>
        </authorList>
    </citation>
    <scope>PROTEIN SEQUENCE OF 29-47</scope>
    <scope>CHARACTERIZATION</scope>
</reference>
<evidence type="ECO:0000250" key="1"/>
<evidence type="ECO:0000269" key="2">
    <source>
    </source>
</evidence>
<evidence type="ECO:0000305" key="3"/>
<keyword id="KW-0903">Direct protein sequencing</keyword>
<keyword id="KW-0574">Periplasm</keyword>
<keyword id="KW-0732">Signal</keyword>
<keyword id="KW-0762">Sugar transport</keyword>
<keyword id="KW-0813">Transport</keyword>
<comment type="function">
    <text>Part of the binding-protein-dependent transport system for lactose.</text>
</comment>
<comment type="subcellular location">
    <subcellularLocation>
        <location>Periplasm</location>
    </subcellularLocation>
</comment>
<comment type="induction">
    <text>By lactose and various galactosides, and subject to catabolite repression by glucose, galactose and succinate. In strain AR50 the expression of the lac operon is constitutive.</text>
</comment>
<comment type="similarity">
    <text evidence="3">Belongs to the bacterial solute-binding protein 1 family.</text>
</comment>